<feature type="chain" id="PRO_0000053047" description="Hemoglobin subunit beta-C">
    <location>
        <begin position="1"/>
        <end position="146"/>
    </location>
</feature>
<feature type="domain" description="Globin" evidence="1">
    <location>
        <begin position="2"/>
        <end position="146"/>
    </location>
</feature>
<feature type="binding site" description="distal binding residue">
    <location>
        <position position="63"/>
    </location>
    <ligand>
        <name>heme b</name>
        <dbReference type="ChEBI" id="CHEBI:60344"/>
    </ligand>
    <ligandPart>
        <name>Fe</name>
        <dbReference type="ChEBI" id="CHEBI:18248"/>
    </ligandPart>
</feature>
<feature type="binding site" description="proximal binding residue">
    <location>
        <position position="92"/>
    </location>
    <ligand>
        <name>heme b</name>
        <dbReference type="ChEBI" id="CHEBI:60344"/>
    </ligand>
    <ligandPart>
        <name>Fe</name>
        <dbReference type="ChEBI" id="CHEBI:18248"/>
    </ligandPart>
</feature>
<comment type="function">
    <text>Involved in oxygen transport from gills to the various peripheral tissues.</text>
</comment>
<comment type="subunit">
    <text evidence="2">HbC is a heterotetramer of two alpha chains and two beta-C chains.</text>
</comment>
<comment type="tissue specificity">
    <text>Red blood cells.</text>
</comment>
<comment type="miscellaneous">
    <text>This fish has three hemoglobins: Hb1 (major) and two minor hemoglobins (about 1-2% of the total).</text>
</comment>
<comment type="similarity">
    <text evidence="1">Belongs to the globin family.</text>
</comment>
<organism>
    <name type="scientific">Trematomus bernacchii</name>
    <name type="common">Emerald rockcod</name>
    <name type="synonym">Pseudotrematomus bernacchii</name>
    <dbReference type="NCBI Taxonomy" id="40690"/>
    <lineage>
        <taxon>Eukaryota</taxon>
        <taxon>Metazoa</taxon>
        <taxon>Chordata</taxon>
        <taxon>Craniata</taxon>
        <taxon>Vertebrata</taxon>
        <taxon>Euteleostomi</taxon>
        <taxon>Actinopterygii</taxon>
        <taxon>Neopterygii</taxon>
        <taxon>Teleostei</taxon>
        <taxon>Neoteleostei</taxon>
        <taxon>Acanthomorphata</taxon>
        <taxon>Eupercaria</taxon>
        <taxon>Perciformes</taxon>
        <taxon>Notothenioidei</taxon>
        <taxon>Nototheniidae</taxon>
        <taxon>Trematomus</taxon>
    </lineage>
</organism>
<evidence type="ECO:0000255" key="1">
    <source>
        <dbReference type="PROSITE-ProRule" id="PRU00238"/>
    </source>
</evidence>
<evidence type="ECO:0000269" key="2">
    <source>
    </source>
</evidence>
<sequence length="146" mass="16351">VEWTDFERATIKDIFSKLEYDVVGPATLARCLVVYPWTQRYFGKFGNLYNATAIAENAMVSKHGTTILHGLDRAVKNMDDIKNTYAELSVLHSEKLHVDPDNFKLLADCLTIVVAARFGSAFTGEVQAAFEKFMAVVVSSLGRQYH</sequence>
<gene>
    <name type="primary">hbbc</name>
</gene>
<protein>
    <recommendedName>
        <fullName>Hemoglobin subunit beta-C</fullName>
    </recommendedName>
    <alternativeName>
        <fullName>Beta-C-globin</fullName>
    </alternativeName>
    <alternativeName>
        <fullName>Hemoglobin beta-C chain</fullName>
    </alternativeName>
</protein>
<dbReference type="PIR" id="E54403">
    <property type="entry name" value="E54403"/>
</dbReference>
<dbReference type="SMR" id="P45722"/>
<dbReference type="GO" id="GO:0072562">
    <property type="term" value="C:blood microparticle"/>
    <property type="evidence" value="ECO:0007669"/>
    <property type="project" value="TreeGrafter"/>
</dbReference>
<dbReference type="GO" id="GO:0031838">
    <property type="term" value="C:haptoglobin-hemoglobin complex"/>
    <property type="evidence" value="ECO:0007669"/>
    <property type="project" value="TreeGrafter"/>
</dbReference>
<dbReference type="GO" id="GO:0005833">
    <property type="term" value="C:hemoglobin complex"/>
    <property type="evidence" value="ECO:0007669"/>
    <property type="project" value="InterPro"/>
</dbReference>
<dbReference type="GO" id="GO:0031720">
    <property type="term" value="F:haptoglobin binding"/>
    <property type="evidence" value="ECO:0007669"/>
    <property type="project" value="TreeGrafter"/>
</dbReference>
<dbReference type="GO" id="GO:0020037">
    <property type="term" value="F:heme binding"/>
    <property type="evidence" value="ECO:0007669"/>
    <property type="project" value="InterPro"/>
</dbReference>
<dbReference type="GO" id="GO:0046872">
    <property type="term" value="F:metal ion binding"/>
    <property type="evidence" value="ECO:0007669"/>
    <property type="project" value="UniProtKB-KW"/>
</dbReference>
<dbReference type="GO" id="GO:0043177">
    <property type="term" value="F:organic acid binding"/>
    <property type="evidence" value="ECO:0007669"/>
    <property type="project" value="TreeGrafter"/>
</dbReference>
<dbReference type="GO" id="GO:0019825">
    <property type="term" value="F:oxygen binding"/>
    <property type="evidence" value="ECO:0007669"/>
    <property type="project" value="InterPro"/>
</dbReference>
<dbReference type="GO" id="GO:0005344">
    <property type="term" value="F:oxygen carrier activity"/>
    <property type="evidence" value="ECO:0007669"/>
    <property type="project" value="UniProtKB-KW"/>
</dbReference>
<dbReference type="GO" id="GO:0004601">
    <property type="term" value="F:peroxidase activity"/>
    <property type="evidence" value="ECO:0007669"/>
    <property type="project" value="TreeGrafter"/>
</dbReference>
<dbReference type="GO" id="GO:0042744">
    <property type="term" value="P:hydrogen peroxide catabolic process"/>
    <property type="evidence" value="ECO:0007669"/>
    <property type="project" value="TreeGrafter"/>
</dbReference>
<dbReference type="CDD" id="cd08925">
    <property type="entry name" value="Hb-beta-like"/>
    <property type="match status" value="1"/>
</dbReference>
<dbReference type="FunFam" id="1.10.490.10:FF:000001">
    <property type="entry name" value="Hemoglobin subunit beta"/>
    <property type="match status" value="1"/>
</dbReference>
<dbReference type="Gene3D" id="1.10.490.10">
    <property type="entry name" value="Globins"/>
    <property type="match status" value="1"/>
</dbReference>
<dbReference type="InterPro" id="IPR000971">
    <property type="entry name" value="Globin"/>
</dbReference>
<dbReference type="InterPro" id="IPR009050">
    <property type="entry name" value="Globin-like_sf"/>
</dbReference>
<dbReference type="InterPro" id="IPR012292">
    <property type="entry name" value="Globin/Proto"/>
</dbReference>
<dbReference type="InterPro" id="IPR002337">
    <property type="entry name" value="Hemoglobin_b"/>
</dbReference>
<dbReference type="InterPro" id="IPR050056">
    <property type="entry name" value="Hemoglobin_oxygen_transport"/>
</dbReference>
<dbReference type="PANTHER" id="PTHR11442">
    <property type="entry name" value="HEMOGLOBIN FAMILY MEMBER"/>
    <property type="match status" value="1"/>
</dbReference>
<dbReference type="PANTHER" id="PTHR11442:SF7">
    <property type="entry name" value="HEMOGLOBIN SUBUNIT EPSILON"/>
    <property type="match status" value="1"/>
</dbReference>
<dbReference type="Pfam" id="PF00042">
    <property type="entry name" value="Globin"/>
    <property type="match status" value="1"/>
</dbReference>
<dbReference type="PRINTS" id="PR00814">
    <property type="entry name" value="BETAHAEM"/>
</dbReference>
<dbReference type="SUPFAM" id="SSF46458">
    <property type="entry name" value="Globin-like"/>
    <property type="match status" value="1"/>
</dbReference>
<dbReference type="PROSITE" id="PS01033">
    <property type="entry name" value="GLOBIN"/>
    <property type="match status" value="1"/>
</dbReference>
<reference key="1">
    <citation type="journal article" date="1994" name="J. Biol. Chem.">
        <title>Molecular characterization of the functionally distinct hemoglobins of the Antarctic fish Trematomus newnesi.</title>
        <authorList>
            <person name="D'Avino R."/>
            <person name="Caruso C."/>
            <person name="Tamburrini M."/>
            <person name="Romano M."/>
            <person name="Rutigliano B."/>
            <person name="Polverino de Laureto P."/>
            <person name="Camardella L."/>
            <person name="Carratore V."/>
            <person name="di Prisco G."/>
        </authorList>
    </citation>
    <scope>PROTEIN SEQUENCE</scope>
    <scope>SUBUNIT</scope>
</reference>
<accession>P45722</accession>
<proteinExistence type="evidence at protein level"/>
<keyword id="KW-0903">Direct protein sequencing</keyword>
<keyword id="KW-0349">Heme</keyword>
<keyword id="KW-0408">Iron</keyword>
<keyword id="KW-0479">Metal-binding</keyword>
<keyword id="KW-0561">Oxygen transport</keyword>
<keyword id="KW-0813">Transport</keyword>
<name>HBBC_TREBE</name>